<keyword id="KW-0066">ATP synthesis</keyword>
<keyword id="KW-0067">ATP-binding</keyword>
<keyword id="KW-0139">CF(1)</keyword>
<keyword id="KW-0150">Chloroplast</keyword>
<keyword id="KW-0375">Hydrogen ion transport</keyword>
<keyword id="KW-0406">Ion transport</keyword>
<keyword id="KW-0472">Membrane</keyword>
<keyword id="KW-0547">Nucleotide-binding</keyword>
<keyword id="KW-0934">Plastid</keyword>
<keyword id="KW-0793">Thylakoid</keyword>
<keyword id="KW-1278">Translocase</keyword>
<keyword id="KW-0813">Transport</keyword>
<proteinExistence type="inferred from homology"/>
<reference key="1">
    <citation type="journal article" date="2008" name="Nucleic Acids Res.">
        <title>The complete nucleotide sequences of the five genetically distinct plastid genomes of Oenothera, subsection Oenothera: I. Sequence evaluation and plastome evolution.</title>
        <authorList>
            <person name="Greiner S."/>
            <person name="Wang X."/>
            <person name="Rauwolf U."/>
            <person name="Silber M.V."/>
            <person name="Mayer K."/>
            <person name="Meurer J."/>
            <person name="Haberer G."/>
            <person name="Herrmann R.G."/>
        </authorList>
    </citation>
    <scope>NUCLEOTIDE SEQUENCE [LARGE SCALE GENOMIC DNA]</scope>
    <source>
        <strain>cv. Rr-lamarckiana Sweden</strain>
    </source>
</reference>
<feature type="chain" id="PRO_0000339633" description="ATP synthase subunit beta, chloroplastic">
    <location>
        <begin position="1"/>
        <end position="498"/>
    </location>
</feature>
<feature type="binding site" evidence="1">
    <location>
        <begin position="172"/>
        <end position="179"/>
    </location>
    <ligand>
        <name>ATP</name>
        <dbReference type="ChEBI" id="CHEBI:30616"/>
    </ligand>
</feature>
<gene>
    <name evidence="1" type="primary">atpB</name>
</gene>
<geneLocation type="chloroplast"/>
<name>ATPB_OENGL</name>
<protein>
    <recommendedName>
        <fullName evidence="1">ATP synthase subunit beta, chloroplastic</fullName>
        <ecNumber evidence="1">7.1.2.2</ecNumber>
    </recommendedName>
    <alternativeName>
        <fullName evidence="1">ATP synthase F1 sector subunit beta</fullName>
    </alternativeName>
    <alternativeName>
        <fullName evidence="1">F-ATPase subunit beta</fullName>
    </alternativeName>
</protein>
<dbReference type="EC" id="7.1.2.2" evidence="1"/>
<dbReference type="EMBL" id="EU262890">
    <property type="protein sequence ID" value="ABX10021.1"/>
    <property type="molecule type" value="Genomic_DNA"/>
</dbReference>
<dbReference type="RefSeq" id="YP_001687267.1">
    <property type="nucleotide sequence ID" value="NC_010360.2"/>
</dbReference>
<dbReference type="SMR" id="B0Z528"/>
<dbReference type="GeneID" id="5955246"/>
<dbReference type="GO" id="GO:0009535">
    <property type="term" value="C:chloroplast thylakoid membrane"/>
    <property type="evidence" value="ECO:0007669"/>
    <property type="project" value="UniProtKB-SubCell"/>
</dbReference>
<dbReference type="GO" id="GO:0005739">
    <property type="term" value="C:mitochondrion"/>
    <property type="evidence" value="ECO:0007669"/>
    <property type="project" value="GOC"/>
</dbReference>
<dbReference type="GO" id="GO:0045259">
    <property type="term" value="C:proton-transporting ATP synthase complex"/>
    <property type="evidence" value="ECO:0007669"/>
    <property type="project" value="UniProtKB-KW"/>
</dbReference>
<dbReference type="GO" id="GO:0005524">
    <property type="term" value="F:ATP binding"/>
    <property type="evidence" value="ECO:0007669"/>
    <property type="project" value="UniProtKB-UniRule"/>
</dbReference>
<dbReference type="GO" id="GO:0016887">
    <property type="term" value="F:ATP hydrolysis activity"/>
    <property type="evidence" value="ECO:0007669"/>
    <property type="project" value="InterPro"/>
</dbReference>
<dbReference type="GO" id="GO:0046933">
    <property type="term" value="F:proton-transporting ATP synthase activity, rotational mechanism"/>
    <property type="evidence" value="ECO:0007669"/>
    <property type="project" value="UniProtKB-UniRule"/>
</dbReference>
<dbReference type="GO" id="GO:0042776">
    <property type="term" value="P:proton motive force-driven mitochondrial ATP synthesis"/>
    <property type="evidence" value="ECO:0007669"/>
    <property type="project" value="TreeGrafter"/>
</dbReference>
<dbReference type="CDD" id="cd18110">
    <property type="entry name" value="ATP-synt_F1_beta_C"/>
    <property type="match status" value="1"/>
</dbReference>
<dbReference type="CDD" id="cd18115">
    <property type="entry name" value="ATP-synt_F1_beta_N"/>
    <property type="match status" value="1"/>
</dbReference>
<dbReference type="CDD" id="cd01133">
    <property type="entry name" value="F1-ATPase_beta_CD"/>
    <property type="match status" value="1"/>
</dbReference>
<dbReference type="FunFam" id="1.10.1140.10:FF:000001">
    <property type="entry name" value="ATP synthase subunit beta"/>
    <property type="match status" value="1"/>
</dbReference>
<dbReference type="FunFam" id="3.40.50.12240:FF:000006">
    <property type="entry name" value="ATP synthase subunit beta"/>
    <property type="match status" value="1"/>
</dbReference>
<dbReference type="FunFam" id="3.40.50.300:FF:000004">
    <property type="entry name" value="ATP synthase subunit beta"/>
    <property type="match status" value="1"/>
</dbReference>
<dbReference type="FunFam" id="2.40.10.170:FF:000002">
    <property type="entry name" value="ATP synthase subunit beta, chloroplastic"/>
    <property type="match status" value="1"/>
</dbReference>
<dbReference type="Gene3D" id="2.40.10.170">
    <property type="match status" value="1"/>
</dbReference>
<dbReference type="Gene3D" id="1.10.1140.10">
    <property type="entry name" value="Bovine Mitochondrial F1-atpase, Atp Synthase Beta Chain, Chain D, domain 3"/>
    <property type="match status" value="1"/>
</dbReference>
<dbReference type="Gene3D" id="3.40.50.300">
    <property type="entry name" value="P-loop containing nucleotide triphosphate hydrolases"/>
    <property type="match status" value="1"/>
</dbReference>
<dbReference type="HAMAP" id="MF_01347">
    <property type="entry name" value="ATP_synth_beta_bact"/>
    <property type="match status" value="1"/>
</dbReference>
<dbReference type="InterPro" id="IPR003593">
    <property type="entry name" value="AAA+_ATPase"/>
</dbReference>
<dbReference type="InterPro" id="IPR055190">
    <property type="entry name" value="ATP-synt_VA_C"/>
</dbReference>
<dbReference type="InterPro" id="IPR005722">
    <property type="entry name" value="ATP_synth_F1_bsu"/>
</dbReference>
<dbReference type="InterPro" id="IPR020003">
    <property type="entry name" value="ATPase_a/bsu_AS"/>
</dbReference>
<dbReference type="InterPro" id="IPR050053">
    <property type="entry name" value="ATPase_alpha/beta_chains"/>
</dbReference>
<dbReference type="InterPro" id="IPR004100">
    <property type="entry name" value="ATPase_F1/V1/A1_a/bsu_N"/>
</dbReference>
<dbReference type="InterPro" id="IPR036121">
    <property type="entry name" value="ATPase_F1/V1/A1_a/bsu_N_sf"/>
</dbReference>
<dbReference type="InterPro" id="IPR000194">
    <property type="entry name" value="ATPase_F1/V1/A1_a/bsu_nucl-bd"/>
</dbReference>
<dbReference type="InterPro" id="IPR024034">
    <property type="entry name" value="ATPase_F1/V1_b/a_C"/>
</dbReference>
<dbReference type="InterPro" id="IPR027417">
    <property type="entry name" value="P-loop_NTPase"/>
</dbReference>
<dbReference type="NCBIfam" id="TIGR01039">
    <property type="entry name" value="atpD"/>
    <property type="match status" value="1"/>
</dbReference>
<dbReference type="PANTHER" id="PTHR15184">
    <property type="entry name" value="ATP SYNTHASE"/>
    <property type="match status" value="1"/>
</dbReference>
<dbReference type="PANTHER" id="PTHR15184:SF71">
    <property type="entry name" value="ATP SYNTHASE SUBUNIT BETA, MITOCHONDRIAL"/>
    <property type="match status" value="1"/>
</dbReference>
<dbReference type="Pfam" id="PF00006">
    <property type="entry name" value="ATP-synt_ab"/>
    <property type="match status" value="1"/>
</dbReference>
<dbReference type="Pfam" id="PF02874">
    <property type="entry name" value="ATP-synt_ab_N"/>
    <property type="match status" value="1"/>
</dbReference>
<dbReference type="Pfam" id="PF22919">
    <property type="entry name" value="ATP-synt_VA_C"/>
    <property type="match status" value="1"/>
</dbReference>
<dbReference type="SMART" id="SM00382">
    <property type="entry name" value="AAA"/>
    <property type="match status" value="1"/>
</dbReference>
<dbReference type="SUPFAM" id="SSF47917">
    <property type="entry name" value="C-terminal domain of alpha and beta subunits of F1 ATP synthase"/>
    <property type="match status" value="1"/>
</dbReference>
<dbReference type="SUPFAM" id="SSF50615">
    <property type="entry name" value="N-terminal domain of alpha and beta subunits of F1 ATP synthase"/>
    <property type="match status" value="1"/>
</dbReference>
<dbReference type="SUPFAM" id="SSF52540">
    <property type="entry name" value="P-loop containing nucleoside triphosphate hydrolases"/>
    <property type="match status" value="1"/>
</dbReference>
<dbReference type="PROSITE" id="PS00152">
    <property type="entry name" value="ATPASE_ALPHA_BETA"/>
    <property type="match status" value="1"/>
</dbReference>
<comment type="function">
    <text evidence="1">Produces ATP from ADP in the presence of a proton gradient across the membrane. The catalytic sites are hosted primarily by the beta subunits.</text>
</comment>
<comment type="catalytic activity">
    <reaction evidence="1">
        <text>ATP + H2O + 4 H(+)(in) = ADP + phosphate + 5 H(+)(out)</text>
        <dbReference type="Rhea" id="RHEA:57720"/>
        <dbReference type="ChEBI" id="CHEBI:15377"/>
        <dbReference type="ChEBI" id="CHEBI:15378"/>
        <dbReference type="ChEBI" id="CHEBI:30616"/>
        <dbReference type="ChEBI" id="CHEBI:43474"/>
        <dbReference type="ChEBI" id="CHEBI:456216"/>
        <dbReference type="EC" id="7.1.2.2"/>
    </reaction>
</comment>
<comment type="subunit">
    <text evidence="1">F-type ATPases have 2 components, CF(1) - the catalytic core - and CF(0) - the membrane proton channel. CF(1) has five subunits: alpha(3), beta(3), gamma(1), delta(1), epsilon(1). CF(0) has four main subunits: a(1), b(1), b'(1) and c(9-12).</text>
</comment>
<comment type="subcellular location">
    <subcellularLocation>
        <location evidence="1">Plastid</location>
        <location evidence="1">Chloroplast thylakoid membrane</location>
        <topology evidence="1">Peripheral membrane protein</topology>
    </subcellularLocation>
</comment>
<comment type="similarity">
    <text evidence="1">Belongs to the ATPase alpha/beta chains family.</text>
</comment>
<evidence type="ECO:0000255" key="1">
    <source>
        <dbReference type="HAMAP-Rule" id="MF_01347"/>
    </source>
</evidence>
<accession>B0Z528</accession>
<sequence>MRINPTTSGPGVSTLEKKKSGRIAQIIGPVLDVTFPPGKMPNIYNALVVKGRDTGGQEINVTCEVQQLLGNNRVRAVAMSATDGLTRGMEVIDTGAPLSVPVGGATLGRIFNVLGEPVDELGPVDTRTTSPIHRSAPAFIQLDTKLSIFETGIKVVDLLAPYRRGGKIGLFGGAGVGKTVLIMELINNIAKAHGGVSVFGGVGERTREGNDLYMEMKESGVINEQNIAESKVALVYGQMNEPPGARMRVGLTALTMAEYFRDVNKQNVLLFIDNIFRFVQAGSEVSALLGRMPSAVGYQPTLSTEMGSLQERITSTKAGSITSIQAVYVPADDLTDPAPATTFAHLDATTVLSRGLAAKGIYPAVDPLDSTSTMLQPRIVGDEHYETAQRVKETLQRYKELQDIISILGLDELSEEDRLTVARARKIERFLSQPFFVAEVFTGSPGKYVGLAETIRGFKLILSGELDGLPEQAFYLVGTIDEATAKAANLEMESDLKK</sequence>
<organism>
    <name type="scientific">Oenothera glazioviana</name>
    <name type="common">Large-flowered evening primrose</name>
    <name type="synonym">Oenothera erythrosepala</name>
    <dbReference type="NCBI Taxonomy" id="482428"/>
    <lineage>
        <taxon>Eukaryota</taxon>
        <taxon>Viridiplantae</taxon>
        <taxon>Streptophyta</taxon>
        <taxon>Embryophyta</taxon>
        <taxon>Tracheophyta</taxon>
        <taxon>Spermatophyta</taxon>
        <taxon>Magnoliopsida</taxon>
        <taxon>eudicotyledons</taxon>
        <taxon>Gunneridae</taxon>
        <taxon>Pentapetalae</taxon>
        <taxon>rosids</taxon>
        <taxon>malvids</taxon>
        <taxon>Myrtales</taxon>
        <taxon>Onagraceae</taxon>
        <taxon>Onagroideae</taxon>
        <taxon>Onagreae</taxon>
        <taxon>Oenothera</taxon>
    </lineage>
</organism>